<accession>Q3ZEE5</accession>
<gene>
    <name type="primary">TRIM5</name>
</gene>
<name>TRIM5_HYLLA</name>
<protein>
    <recommendedName>
        <fullName>Tripartite motif-containing protein 5</fullName>
        <ecNumber>2.3.2.27</ecNumber>
    </recommendedName>
    <alternativeName>
        <fullName evidence="8">RING-type E3 ubiquitin transferase TRIM5</fullName>
    </alternativeName>
    <alternativeName>
        <fullName>TRIM5alpha</fullName>
    </alternativeName>
</protein>
<proteinExistence type="inferred from homology"/>
<feature type="initiator methionine" description="Removed" evidence="3">
    <location>
        <position position="1"/>
    </location>
</feature>
<feature type="chain" id="PRO_0000273459" description="Tripartite motif-containing protein 5">
    <location>
        <begin position="2"/>
        <end position="493"/>
    </location>
</feature>
<feature type="domain" description="B30.2/SPRY" evidence="7">
    <location>
        <begin position="281"/>
        <end position="493"/>
    </location>
</feature>
<feature type="zinc finger region" description="RING-type" evidence="6">
    <location>
        <begin position="15"/>
        <end position="58"/>
    </location>
</feature>
<feature type="zinc finger region" description="B box-type" evidence="5">
    <location>
        <begin position="90"/>
        <end position="131"/>
    </location>
</feature>
<feature type="region of interest" description="Required for interaction with GABARAP and for autophagy" evidence="2">
    <location>
        <begin position="185"/>
        <end position="198"/>
    </location>
</feature>
<feature type="coiled-coil region" evidence="4">
    <location>
        <begin position="130"/>
        <end position="240"/>
    </location>
</feature>
<feature type="binding site" evidence="5">
    <location>
        <position position="95"/>
    </location>
    <ligand>
        <name>Zn(2+)</name>
        <dbReference type="ChEBI" id="CHEBI:29105"/>
    </ligand>
</feature>
<feature type="binding site" evidence="5">
    <location>
        <position position="98"/>
    </location>
    <ligand>
        <name>Zn(2+)</name>
        <dbReference type="ChEBI" id="CHEBI:29105"/>
    </ligand>
</feature>
<feature type="binding site" evidence="5">
    <location>
        <position position="117"/>
    </location>
    <ligand>
        <name>Zn(2+)</name>
        <dbReference type="ChEBI" id="CHEBI:29105"/>
    </ligand>
</feature>
<feature type="binding site" evidence="5">
    <location>
        <position position="123"/>
    </location>
    <ligand>
        <name>Zn(2+)</name>
        <dbReference type="ChEBI" id="CHEBI:29105"/>
    </ligand>
</feature>
<feature type="modified residue" description="N-acetylalanine" evidence="3">
    <location>
        <position position="2"/>
    </location>
</feature>
<feature type="modified residue" description="Phosphoserine" evidence="3">
    <location>
        <position position="85"/>
    </location>
</feature>
<comment type="function">
    <text evidence="3">Capsid-specific restriction factor that prevents infection from non-host-adapted retroviruses. Blocks viral replication early in the life cycle, after viral entry but before reverse transcription. In addition to acting as a capsid-specific restriction factor, also acts as a pattern recognition receptor that activates innate immune signaling in response to the retroviral capsid lattice. Binding to the viral capsid triggers its E3 ubiquitin ligase activity, and in concert with the heterodimeric ubiquitin conjugating enzyme complex UBE2V1-UBE2N (also known as UBC13-UEV1A complex) generates 'Lys-63'-linked polyubiquitin chains, which in turn are catalysts in the autophosphorylation of the MAP3K7/TAK1 complex (includes TAK1, TAB2, and TAB3). Activation of the MAP3K7/TAK1 complex by autophosphorylation results in the induction and expression of NF-kappa-B and MAPK-responsive inflammatory genes, thereby leading to an innate immune response in the infected cell. Plays a role in regulating autophagy through activation of autophagy regulator BECN1 by causing its dissociation from its inhibitors BCL2 and TAB2.</text>
</comment>
<comment type="catalytic activity">
    <reaction>
        <text>S-ubiquitinyl-[E2 ubiquitin-conjugating enzyme]-L-cysteine + [acceptor protein]-L-lysine = [E2 ubiquitin-conjugating enzyme]-L-cysteine + N(6)-ubiquitinyl-[acceptor protein]-L-lysine.</text>
        <dbReference type="EC" id="2.3.2.27"/>
    </reaction>
</comment>
<comment type="pathway">
    <text>Protein modification; protein ubiquitination.</text>
</comment>
<comment type="subunit">
    <text evidence="2 3">Can form homodimers and homotrimers. In addition to lower-order dimerization, also exhibits a higher-order multimerization and both low- and high-order multimerizations are essential for its restriction activity. Interacts with BTBD1 and BTBD2. Interacts with PSMC4, PSMC5, PSMD7 and HSPA8/HSC70. Interacts (via B30.2/SPRY domain) with HSPA1A/B. Interacts with PSMC2, MAP3K7/TAK1, TAB2 and TAB3. Interacts with SQSTM1. Interacts with TRIM6 and TRIM34. Interacts with ULK1 (phosphorylated form), GABARAP, GABARAPL1, GABARAPL2, MAP1LC3A, MAP1LC3C and BECN1.</text>
</comment>
<comment type="subcellular location">
    <subcellularLocation>
        <location evidence="2">Cytoplasm</location>
    </subcellularLocation>
    <subcellularLocation>
        <location evidence="2">Nucleus</location>
    </subcellularLocation>
    <text evidence="2">Predominantly localizes in cytoplasmic bodies. Localization may be influenced by the coexpression of other TRIM proteins, hence partial nuclear localization is observed in the presence of TRIM22 or TRIM27. In cytoplasmic bodies, colocalizes with proteasomal subunits and SQSTM1.</text>
</comment>
<comment type="domain">
    <text evidence="2 3">The B box-type zinc finger domain and the coiled-coil domain contribute to the higher and low order multimerization respectively which is essential for restriction activity. The coiled coil domain is important for higher order multimerization by promoting the initial dimerization.</text>
</comment>
<comment type="domain">
    <text evidence="1">The B30.2/SPRY domain acts as a capsid recognition domain. Polymorphisms in this domain explain the observed species-specific differences among orthologs (By similarity).</text>
</comment>
<comment type="domain">
    <text evidence="1">The RING-type zinc finger domain confers E3 ubiquitin ligase activity and is essential for retrovirus restriction activity, autoubiquitination and higher-order multimerization.</text>
</comment>
<comment type="PTM">
    <text evidence="1">Degraded in a proteasome-independent fashion in the absence of viral infection but in a proteasome-dependent fashion following exposure to restriction sensitive virus.</text>
</comment>
<comment type="PTM">
    <text evidence="1">Autoubiquitinated in a RING finger- and UBE2D2-dependent manner. Monoubiquitinated by TRIM21. Deubiquitinated by Yersinia YopJ. Ubiquitination may not lead to proteasomal degradation (By similarity).</text>
</comment>
<comment type="similarity">
    <text evidence="8">Belongs to the TRIM/RBCC family.</text>
</comment>
<dbReference type="EC" id="2.3.2.27"/>
<dbReference type="EMBL" id="AY923180">
    <property type="protein sequence ID" value="AAY23162.1"/>
    <property type="molecule type" value="Genomic_DNA"/>
</dbReference>
<dbReference type="SMR" id="Q3ZEE5"/>
<dbReference type="UniPathway" id="UPA00143"/>
<dbReference type="GO" id="GO:0005634">
    <property type="term" value="C:nucleus"/>
    <property type="evidence" value="ECO:0007669"/>
    <property type="project" value="UniProtKB-SubCell"/>
</dbReference>
<dbReference type="GO" id="GO:0000932">
    <property type="term" value="C:P-body"/>
    <property type="evidence" value="ECO:0000250"/>
    <property type="project" value="UniProtKB"/>
</dbReference>
<dbReference type="GO" id="GO:0038187">
    <property type="term" value="F:pattern recognition receptor activity"/>
    <property type="evidence" value="ECO:0000250"/>
    <property type="project" value="UniProtKB"/>
</dbReference>
<dbReference type="GO" id="GO:0004842">
    <property type="term" value="F:ubiquitin-protein transferase activity"/>
    <property type="evidence" value="ECO:0000250"/>
    <property type="project" value="UniProtKB"/>
</dbReference>
<dbReference type="GO" id="GO:0008270">
    <property type="term" value="F:zinc ion binding"/>
    <property type="evidence" value="ECO:0007669"/>
    <property type="project" value="UniProtKB-KW"/>
</dbReference>
<dbReference type="GO" id="GO:0002218">
    <property type="term" value="P:activation of innate immune response"/>
    <property type="evidence" value="ECO:0000250"/>
    <property type="project" value="UniProtKB"/>
</dbReference>
<dbReference type="GO" id="GO:0006914">
    <property type="term" value="P:autophagy"/>
    <property type="evidence" value="ECO:0007669"/>
    <property type="project" value="UniProtKB-KW"/>
</dbReference>
<dbReference type="GO" id="GO:0051607">
    <property type="term" value="P:defense response to virus"/>
    <property type="evidence" value="ECO:0007669"/>
    <property type="project" value="UniProtKB-KW"/>
</dbReference>
<dbReference type="GO" id="GO:0045087">
    <property type="term" value="P:innate immune response"/>
    <property type="evidence" value="ECO:0007669"/>
    <property type="project" value="UniProtKB-KW"/>
</dbReference>
<dbReference type="GO" id="GO:0043123">
    <property type="term" value="P:positive regulation of canonical NF-kappaB signal transduction"/>
    <property type="evidence" value="ECO:0000250"/>
    <property type="project" value="UniProtKB"/>
</dbReference>
<dbReference type="GO" id="GO:0043410">
    <property type="term" value="P:positive regulation of MAPK cascade"/>
    <property type="evidence" value="ECO:0000250"/>
    <property type="project" value="UniProtKB"/>
</dbReference>
<dbReference type="GO" id="GO:0051092">
    <property type="term" value="P:positive regulation of NF-kappaB transcription factor activity"/>
    <property type="evidence" value="ECO:0000250"/>
    <property type="project" value="UniProtKB"/>
</dbReference>
<dbReference type="GO" id="GO:0070534">
    <property type="term" value="P:protein K63-linked ubiquitination"/>
    <property type="evidence" value="ECO:0000250"/>
    <property type="project" value="UniProtKB"/>
</dbReference>
<dbReference type="GO" id="GO:0031664">
    <property type="term" value="P:regulation of lipopolysaccharide-mediated signaling pathway"/>
    <property type="evidence" value="ECO:0000250"/>
    <property type="project" value="UniProtKB"/>
</dbReference>
<dbReference type="CDD" id="cd19761">
    <property type="entry name" value="Bbox2_TRIM5-like"/>
    <property type="match status" value="1"/>
</dbReference>
<dbReference type="CDD" id="cd16591">
    <property type="entry name" value="RING-HC_TRIM5-like_C-IV"/>
    <property type="match status" value="1"/>
</dbReference>
<dbReference type="CDD" id="cd15822">
    <property type="entry name" value="SPRY_PRY_TRIM5"/>
    <property type="match status" value="1"/>
</dbReference>
<dbReference type="FunFam" id="2.60.120.920:FF:000023">
    <property type="entry name" value="Tripartite motif-containing 5 (Predicted)"/>
    <property type="match status" value="1"/>
</dbReference>
<dbReference type="FunFam" id="3.30.160.60:FF:000386">
    <property type="entry name" value="Tripartite motif-containing 5 (Predicted)"/>
    <property type="match status" value="1"/>
</dbReference>
<dbReference type="FunFam" id="3.30.40.10:FF:000144">
    <property type="entry name" value="Tripartite motif-containing 5 (Predicted)"/>
    <property type="match status" value="1"/>
</dbReference>
<dbReference type="Gene3D" id="2.60.120.920">
    <property type="match status" value="1"/>
</dbReference>
<dbReference type="Gene3D" id="3.30.160.60">
    <property type="entry name" value="Classic Zinc Finger"/>
    <property type="match status" value="1"/>
</dbReference>
<dbReference type="Gene3D" id="3.30.40.10">
    <property type="entry name" value="Zinc/RING finger domain, C3HC4 (zinc finger)"/>
    <property type="match status" value="1"/>
</dbReference>
<dbReference type="InterPro" id="IPR001870">
    <property type="entry name" value="B30.2/SPRY"/>
</dbReference>
<dbReference type="InterPro" id="IPR043136">
    <property type="entry name" value="B30.2/SPRY_sf"/>
</dbReference>
<dbReference type="InterPro" id="IPR003879">
    <property type="entry name" value="Butyrophylin_SPRY"/>
</dbReference>
<dbReference type="InterPro" id="IPR013320">
    <property type="entry name" value="ConA-like_dom_sf"/>
</dbReference>
<dbReference type="InterPro" id="IPR003877">
    <property type="entry name" value="SPRY_dom"/>
</dbReference>
<dbReference type="InterPro" id="IPR050143">
    <property type="entry name" value="TRIM/RBCC"/>
</dbReference>
<dbReference type="InterPro" id="IPR027370">
    <property type="entry name" value="Znf-RING_euk"/>
</dbReference>
<dbReference type="InterPro" id="IPR000315">
    <property type="entry name" value="Znf_B-box"/>
</dbReference>
<dbReference type="InterPro" id="IPR001841">
    <property type="entry name" value="Znf_RING"/>
</dbReference>
<dbReference type="InterPro" id="IPR013083">
    <property type="entry name" value="Znf_RING/FYVE/PHD"/>
</dbReference>
<dbReference type="InterPro" id="IPR017907">
    <property type="entry name" value="Znf_RING_CS"/>
</dbReference>
<dbReference type="PANTHER" id="PTHR24103">
    <property type="entry name" value="E3 UBIQUITIN-PROTEIN LIGASE TRIM"/>
    <property type="match status" value="1"/>
</dbReference>
<dbReference type="Pfam" id="PF00622">
    <property type="entry name" value="SPRY"/>
    <property type="match status" value="1"/>
</dbReference>
<dbReference type="Pfam" id="PF00643">
    <property type="entry name" value="zf-B_box"/>
    <property type="match status" value="1"/>
</dbReference>
<dbReference type="Pfam" id="PF13445">
    <property type="entry name" value="zf-RING_UBOX"/>
    <property type="match status" value="1"/>
</dbReference>
<dbReference type="PRINTS" id="PR01407">
    <property type="entry name" value="BUTYPHLNCDUF"/>
</dbReference>
<dbReference type="SMART" id="SM00336">
    <property type="entry name" value="BBOX"/>
    <property type="match status" value="1"/>
</dbReference>
<dbReference type="SMART" id="SM00184">
    <property type="entry name" value="RING"/>
    <property type="match status" value="1"/>
</dbReference>
<dbReference type="SMART" id="SM00449">
    <property type="entry name" value="SPRY"/>
    <property type="match status" value="1"/>
</dbReference>
<dbReference type="SUPFAM" id="SSF57845">
    <property type="entry name" value="B-box zinc-binding domain"/>
    <property type="match status" value="1"/>
</dbReference>
<dbReference type="SUPFAM" id="SSF49899">
    <property type="entry name" value="Concanavalin A-like lectins/glucanases"/>
    <property type="match status" value="1"/>
</dbReference>
<dbReference type="SUPFAM" id="SSF57850">
    <property type="entry name" value="RING/U-box"/>
    <property type="match status" value="1"/>
</dbReference>
<dbReference type="PROSITE" id="PS50188">
    <property type="entry name" value="B302_SPRY"/>
    <property type="match status" value="1"/>
</dbReference>
<dbReference type="PROSITE" id="PS50119">
    <property type="entry name" value="ZF_BBOX"/>
    <property type="match status" value="1"/>
</dbReference>
<dbReference type="PROSITE" id="PS00518">
    <property type="entry name" value="ZF_RING_1"/>
    <property type="match status" value="1"/>
</dbReference>
<dbReference type="PROSITE" id="PS50089">
    <property type="entry name" value="ZF_RING_2"/>
    <property type="match status" value="1"/>
</dbReference>
<sequence length="493" mass="56733">MASGILVNVKEEVTCPICLELLTQPLSLDCGHSFCQACLTANHKTSMPDGERSCPVCRISYQHKNIRPNRHVANIVEKLREVKLSPEEGQKVDHCARHGEKLLLFCREDRKVICWLCERSQEHRGHHTFLMEEVAQEYQVKLQAALQMLRQKQQEAEQLEADIREEKASWKTQIQYDKTNILADFEQLRHILDWVESNELQNLEKEEKDVLRRLMKSEIEMVQQTQSVRELISDLEHRLQGSVMELLQGVDGVIKRMKNMTLKKPETFPKNKRRVFRAADLQVTLEVLRELRDVRRYWVDVTVAPNNISYAVISEDMRQVSSPEPQIIYEAQGTISQTFVNFNYCTGILGSQSITSGKHYWEVDVSKKSAWILGVCAGFQPDAMYNIEQNENYQPKYGYWVIGLEEGVKCNAFQDGSSHTPSAPFIVPLSVKICPDRVGVFLDYEACTVSFFNITNHGFLIYKFSHCSFSQPVFPYLNPRKCTVPMTLCSPSS</sequence>
<organism>
    <name type="scientific">Hylobates lar</name>
    <name type="common">Lar gibbon</name>
    <name type="synonym">White-handed gibbon</name>
    <dbReference type="NCBI Taxonomy" id="9580"/>
    <lineage>
        <taxon>Eukaryota</taxon>
        <taxon>Metazoa</taxon>
        <taxon>Chordata</taxon>
        <taxon>Craniata</taxon>
        <taxon>Vertebrata</taxon>
        <taxon>Euteleostomi</taxon>
        <taxon>Mammalia</taxon>
        <taxon>Eutheria</taxon>
        <taxon>Euarchontoglires</taxon>
        <taxon>Primates</taxon>
        <taxon>Haplorrhini</taxon>
        <taxon>Catarrhini</taxon>
        <taxon>Hylobatidae</taxon>
        <taxon>Hylobates</taxon>
    </lineage>
</organism>
<reference key="1">
    <citation type="journal article" date="2006" name="Retrovirology">
        <title>Patterns of evolution of host proteins involved in retroviral pathogenesis.</title>
        <authorList>
            <person name="Ortiz M."/>
            <person name="Bleiber G."/>
            <person name="Martinez R."/>
            <person name="Kaessmann H."/>
            <person name="Telenti A."/>
        </authorList>
    </citation>
    <scope>NUCLEOTIDE SEQUENCE [GENOMIC DNA]</scope>
</reference>
<evidence type="ECO:0000250" key="1"/>
<evidence type="ECO:0000250" key="2">
    <source>
        <dbReference type="UniProtKB" id="Q0PF16"/>
    </source>
</evidence>
<evidence type="ECO:0000250" key="3">
    <source>
        <dbReference type="UniProtKB" id="Q9C035"/>
    </source>
</evidence>
<evidence type="ECO:0000255" key="4"/>
<evidence type="ECO:0000255" key="5">
    <source>
        <dbReference type="PROSITE-ProRule" id="PRU00024"/>
    </source>
</evidence>
<evidence type="ECO:0000255" key="6">
    <source>
        <dbReference type="PROSITE-ProRule" id="PRU00175"/>
    </source>
</evidence>
<evidence type="ECO:0000255" key="7">
    <source>
        <dbReference type="PROSITE-ProRule" id="PRU00548"/>
    </source>
</evidence>
<evidence type="ECO:0000305" key="8"/>
<keyword id="KW-0007">Acetylation</keyword>
<keyword id="KW-0051">Antiviral defense</keyword>
<keyword id="KW-0072">Autophagy</keyword>
<keyword id="KW-0175">Coiled coil</keyword>
<keyword id="KW-0963">Cytoplasm</keyword>
<keyword id="KW-0391">Immunity</keyword>
<keyword id="KW-0399">Innate immunity</keyword>
<keyword id="KW-0479">Metal-binding</keyword>
<keyword id="KW-0539">Nucleus</keyword>
<keyword id="KW-0597">Phosphoprotein</keyword>
<keyword id="KW-0808">Transferase</keyword>
<keyword id="KW-0832">Ubl conjugation</keyword>
<keyword id="KW-0833">Ubl conjugation pathway</keyword>
<keyword id="KW-0862">Zinc</keyword>
<keyword id="KW-0863">Zinc-finger</keyword>